<sequence>MRSDMIKKGIDRAPHRSLLRAAGVKEEEMDKPFIGVCNSYIDIIPGHMHLNKFAEVAKEAIREAGGIPFEFNTIGVDDGIAMGHIGMRYSLPSREIICDAAETVINAHWFDGVFFIPNCDKITPGMLMASVRTNVPSVFVSGGPMEAGRTKDGKNLSLASVFEGVGAFSSGKMTREELLEIEQTACPTCGSCSGMFTANSMNSLMEMLGMALPGNGTIVATSEARHQLIKDAAKHLMNLIEKDIRPRDIITKETIDDAFALDMAMGGSTNTVLHTLAIANEAEIEYDLNRINEVAERVPYLCKISPASDYSMDDVHHAGGVAAIIKELCEIDGAIHPDRITITGKSIYENVKDAEITDDVVIRRKDNPYSPVGGLSILFGNLAPNGAVIKVGAVDPSIQIFEGEAIVYNSQEEAQQGINNGDVREGHVVVIRYEGPKGGPGMPEMLAPTSAIIGRGLGTKVALITDGRFSGASRGISIGHISPEAAEGGPIAFIENGDKIRIDLPNRTIEWLVSDEEIAKRQEGWTEPEPKVKKGYLARYSKLVTSANTGGVMKI</sequence>
<feature type="chain" id="PRO_0000103430" description="Dihydroxy-acid dehydratase">
    <location>
        <begin position="1"/>
        <end position="555"/>
    </location>
</feature>
<feature type="active site" description="Proton acceptor" evidence="1">
    <location>
        <position position="470"/>
    </location>
</feature>
<feature type="binding site" evidence="1">
    <location>
        <position position="78"/>
    </location>
    <ligand>
        <name>Mg(2+)</name>
        <dbReference type="ChEBI" id="CHEBI:18420"/>
    </ligand>
</feature>
<feature type="binding site" evidence="1">
    <location>
        <position position="119"/>
    </location>
    <ligand>
        <name>[2Fe-2S] cluster</name>
        <dbReference type="ChEBI" id="CHEBI:190135"/>
    </ligand>
</feature>
<feature type="binding site" evidence="1">
    <location>
        <position position="120"/>
    </location>
    <ligand>
        <name>Mg(2+)</name>
        <dbReference type="ChEBI" id="CHEBI:18420"/>
    </ligand>
</feature>
<feature type="binding site" description="via carbamate group" evidence="1">
    <location>
        <position position="121"/>
    </location>
    <ligand>
        <name>Mg(2+)</name>
        <dbReference type="ChEBI" id="CHEBI:18420"/>
    </ligand>
</feature>
<feature type="binding site" evidence="1">
    <location>
        <position position="192"/>
    </location>
    <ligand>
        <name>[2Fe-2S] cluster</name>
        <dbReference type="ChEBI" id="CHEBI:190135"/>
    </ligand>
</feature>
<feature type="binding site" evidence="1">
    <location>
        <position position="444"/>
    </location>
    <ligand>
        <name>Mg(2+)</name>
        <dbReference type="ChEBI" id="CHEBI:18420"/>
    </ligand>
</feature>
<feature type="modified residue" description="N6-carboxylysine" evidence="1">
    <location>
        <position position="121"/>
    </location>
</feature>
<protein>
    <recommendedName>
        <fullName evidence="1">Dihydroxy-acid dehydratase</fullName>
        <shortName evidence="1">DAD</shortName>
        <ecNumber evidence="1">4.2.1.9</ecNumber>
    </recommendedName>
</protein>
<name>ILVD_HALH5</name>
<evidence type="ECO:0000255" key="1">
    <source>
        <dbReference type="HAMAP-Rule" id="MF_00012"/>
    </source>
</evidence>
<proteinExistence type="inferred from homology"/>
<comment type="function">
    <text evidence="1">Functions in the biosynthesis of branched-chain amino acids. Catalyzes the dehydration of (2R,3R)-2,3-dihydroxy-3-methylpentanoate (2,3-dihydroxy-3-methylvalerate) into 2-oxo-3-methylpentanoate (2-oxo-3-methylvalerate) and of (2R)-2,3-dihydroxy-3-methylbutanoate (2,3-dihydroxyisovalerate) into 2-oxo-3-methylbutanoate (2-oxoisovalerate), the penultimate precursor to L-isoleucine and L-valine, respectively.</text>
</comment>
<comment type="catalytic activity">
    <reaction evidence="1">
        <text>(2R)-2,3-dihydroxy-3-methylbutanoate = 3-methyl-2-oxobutanoate + H2O</text>
        <dbReference type="Rhea" id="RHEA:24809"/>
        <dbReference type="ChEBI" id="CHEBI:11851"/>
        <dbReference type="ChEBI" id="CHEBI:15377"/>
        <dbReference type="ChEBI" id="CHEBI:49072"/>
        <dbReference type="EC" id="4.2.1.9"/>
    </reaction>
    <physiologicalReaction direction="left-to-right" evidence="1">
        <dbReference type="Rhea" id="RHEA:24810"/>
    </physiologicalReaction>
</comment>
<comment type="catalytic activity">
    <reaction evidence="1">
        <text>(2R,3R)-2,3-dihydroxy-3-methylpentanoate = (S)-3-methyl-2-oxopentanoate + H2O</text>
        <dbReference type="Rhea" id="RHEA:27694"/>
        <dbReference type="ChEBI" id="CHEBI:15377"/>
        <dbReference type="ChEBI" id="CHEBI:35146"/>
        <dbReference type="ChEBI" id="CHEBI:49258"/>
        <dbReference type="EC" id="4.2.1.9"/>
    </reaction>
    <physiologicalReaction direction="left-to-right" evidence="1">
        <dbReference type="Rhea" id="RHEA:27695"/>
    </physiologicalReaction>
</comment>
<comment type="cofactor">
    <cofactor evidence="1">
        <name>[2Fe-2S] cluster</name>
        <dbReference type="ChEBI" id="CHEBI:190135"/>
    </cofactor>
    <text evidence="1">Binds 1 [2Fe-2S] cluster per subunit. This cluster acts as a Lewis acid cofactor.</text>
</comment>
<comment type="cofactor">
    <cofactor evidence="1">
        <name>Mg(2+)</name>
        <dbReference type="ChEBI" id="CHEBI:18420"/>
    </cofactor>
</comment>
<comment type="pathway">
    <text evidence="1">Amino-acid biosynthesis; L-isoleucine biosynthesis; L-isoleucine from 2-oxobutanoate: step 3/4.</text>
</comment>
<comment type="pathway">
    <text evidence="1">Amino-acid biosynthesis; L-valine biosynthesis; L-valine from pyruvate: step 3/4.</text>
</comment>
<comment type="subunit">
    <text evidence="1">Homodimer.</text>
</comment>
<comment type="similarity">
    <text evidence="1">Belongs to the IlvD/Edd family.</text>
</comment>
<reference key="1">
    <citation type="journal article" date="2000" name="Nucleic Acids Res.">
        <title>Complete genome sequence of the alkaliphilic bacterium Bacillus halodurans and genomic sequence comparison with Bacillus subtilis.</title>
        <authorList>
            <person name="Takami H."/>
            <person name="Nakasone K."/>
            <person name="Takaki Y."/>
            <person name="Maeno G."/>
            <person name="Sasaki R."/>
            <person name="Masui N."/>
            <person name="Fuji F."/>
            <person name="Hirama C."/>
            <person name="Nakamura Y."/>
            <person name="Ogasawara N."/>
            <person name="Kuhara S."/>
            <person name="Horikoshi K."/>
        </authorList>
    </citation>
    <scope>NUCLEOTIDE SEQUENCE [LARGE SCALE GENOMIC DNA]</scope>
    <source>
        <strain>ATCC BAA-125 / DSM 18197 / FERM 7344 / JCM 9153 / C-125</strain>
    </source>
</reference>
<keyword id="KW-0001">2Fe-2S</keyword>
<keyword id="KW-0028">Amino-acid biosynthesis</keyword>
<keyword id="KW-0100">Branched-chain amino acid biosynthesis</keyword>
<keyword id="KW-0408">Iron</keyword>
<keyword id="KW-0411">Iron-sulfur</keyword>
<keyword id="KW-0456">Lyase</keyword>
<keyword id="KW-0460">Magnesium</keyword>
<keyword id="KW-0479">Metal-binding</keyword>
<keyword id="KW-1185">Reference proteome</keyword>
<dbReference type="EC" id="4.2.1.9" evidence="1"/>
<dbReference type="EMBL" id="BA000004">
    <property type="protein sequence ID" value="BAB06781.1"/>
    <property type="molecule type" value="Genomic_DNA"/>
</dbReference>
<dbReference type="PIR" id="F84032">
    <property type="entry name" value="F84032"/>
</dbReference>
<dbReference type="RefSeq" id="WP_010899206.1">
    <property type="nucleotide sequence ID" value="NC_002570.2"/>
</dbReference>
<dbReference type="SMR" id="Q9K8E4"/>
<dbReference type="STRING" id="272558.gene:10728972"/>
<dbReference type="KEGG" id="bha:BH3062"/>
<dbReference type="eggNOG" id="COG0129">
    <property type="taxonomic scope" value="Bacteria"/>
</dbReference>
<dbReference type="HOGENOM" id="CLU_014271_4_2_9"/>
<dbReference type="OrthoDB" id="9807077at2"/>
<dbReference type="UniPathway" id="UPA00047">
    <property type="reaction ID" value="UER00057"/>
</dbReference>
<dbReference type="UniPathway" id="UPA00049">
    <property type="reaction ID" value="UER00061"/>
</dbReference>
<dbReference type="Proteomes" id="UP000001258">
    <property type="component" value="Chromosome"/>
</dbReference>
<dbReference type="GO" id="GO:0005829">
    <property type="term" value="C:cytosol"/>
    <property type="evidence" value="ECO:0007669"/>
    <property type="project" value="TreeGrafter"/>
</dbReference>
<dbReference type="GO" id="GO:0051537">
    <property type="term" value="F:2 iron, 2 sulfur cluster binding"/>
    <property type="evidence" value="ECO:0007669"/>
    <property type="project" value="UniProtKB-UniRule"/>
</dbReference>
<dbReference type="GO" id="GO:0004160">
    <property type="term" value="F:dihydroxy-acid dehydratase activity"/>
    <property type="evidence" value="ECO:0007669"/>
    <property type="project" value="UniProtKB-UniRule"/>
</dbReference>
<dbReference type="GO" id="GO:0000287">
    <property type="term" value="F:magnesium ion binding"/>
    <property type="evidence" value="ECO:0007669"/>
    <property type="project" value="UniProtKB-UniRule"/>
</dbReference>
<dbReference type="GO" id="GO:0009097">
    <property type="term" value="P:isoleucine biosynthetic process"/>
    <property type="evidence" value="ECO:0007669"/>
    <property type="project" value="UniProtKB-UniRule"/>
</dbReference>
<dbReference type="GO" id="GO:0009099">
    <property type="term" value="P:L-valine biosynthetic process"/>
    <property type="evidence" value="ECO:0007669"/>
    <property type="project" value="UniProtKB-UniRule"/>
</dbReference>
<dbReference type="FunFam" id="3.50.30.80:FF:000001">
    <property type="entry name" value="Dihydroxy-acid dehydratase"/>
    <property type="match status" value="1"/>
</dbReference>
<dbReference type="Gene3D" id="3.50.30.80">
    <property type="entry name" value="IlvD/EDD C-terminal domain-like"/>
    <property type="match status" value="1"/>
</dbReference>
<dbReference type="HAMAP" id="MF_00012">
    <property type="entry name" value="IlvD"/>
    <property type="match status" value="1"/>
</dbReference>
<dbReference type="InterPro" id="IPR042096">
    <property type="entry name" value="Dihydro-acid_dehy_C"/>
</dbReference>
<dbReference type="InterPro" id="IPR004404">
    <property type="entry name" value="DihydroxyA_deHydtase"/>
</dbReference>
<dbReference type="InterPro" id="IPR020558">
    <property type="entry name" value="DiOHA_6PGluconate_deHydtase_CS"/>
</dbReference>
<dbReference type="InterPro" id="IPR056740">
    <property type="entry name" value="ILV_EDD_C"/>
</dbReference>
<dbReference type="InterPro" id="IPR000581">
    <property type="entry name" value="ILV_EDD_N"/>
</dbReference>
<dbReference type="InterPro" id="IPR037237">
    <property type="entry name" value="IlvD/EDD_N"/>
</dbReference>
<dbReference type="NCBIfam" id="TIGR00110">
    <property type="entry name" value="ilvD"/>
    <property type="match status" value="1"/>
</dbReference>
<dbReference type="NCBIfam" id="NF002068">
    <property type="entry name" value="PRK00911.1"/>
    <property type="match status" value="1"/>
</dbReference>
<dbReference type="PANTHER" id="PTHR43661">
    <property type="entry name" value="D-XYLONATE DEHYDRATASE"/>
    <property type="match status" value="1"/>
</dbReference>
<dbReference type="PANTHER" id="PTHR43661:SF3">
    <property type="entry name" value="D-XYLONATE DEHYDRATASE YAGF-RELATED"/>
    <property type="match status" value="1"/>
</dbReference>
<dbReference type="Pfam" id="PF24877">
    <property type="entry name" value="ILV_EDD_C"/>
    <property type="match status" value="1"/>
</dbReference>
<dbReference type="Pfam" id="PF00920">
    <property type="entry name" value="ILVD_EDD_N"/>
    <property type="match status" value="1"/>
</dbReference>
<dbReference type="SUPFAM" id="SSF143975">
    <property type="entry name" value="IlvD/EDD N-terminal domain-like"/>
    <property type="match status" value="1"/>
</dbReference>
<dbReference type="SUPFAM" id="SSF52016">
    <property type="entry name" value="LeuD/IlvD-like"/>
    <property type="match status" value="1"/>
</dbReference>
<dbReference type="PROSITE" id="PS00886">
    <property type="entry name" value="ILVD_EDD_1"/>
    <property type="match status" value="1"/>
</dbReference>
<dbReference type="PROSITE" id="PS00887">
    <property type="entry name" value="ILVD_EDD_2"/>
    <property type="match status" value="1"/>
</dbReference>
<organism>
    <name type="scientific">Halalkalibacterium halodurans (strain ATCC BAA-125 / DSM 18197 / FERM 7344 / JCM 9153 / C-125)</name>
    <name type="common">Bacillus halodurans</name>
    <dbReference type="NCBI Taxonomy" id="272558"/>
    <lineage>
        <taxon>Bacteria</taxon>
        <taxon>Bacillati</taxon>
        <taxon>Bacillota</taxon>
        <taxon>Bacilli</taxon>
        <taxon>Bacillales</taxon>
        <taxon>Bacillaceae</taxon>
        <taxon>Halalkalibacterium (ex Joshi et al. 2022)</taxon>
    </lineage>
</organism>
<accession>Q9K8E4</accession>
<gene>
    <name evidence="1" type="primary">ilvD</name>
    <name type="ordered locus">BH3062</name>
</gene>